<organism>
    <name type="scientific">Yarrowia lipolytica (strain CLIB 122 / E 150)</name>
    <name type="common">Yeast</name>
    <name type="synonym">Candida lipolytica</name>
    <dbReference type="NCBI Taxonomy" id="284591"/>
    <lineage>
        <taxon>Eukaryota</taxon>
        <taxon>Fungi</taxon>
        <taxon>Dikarya</taxon>
        <taxon>Ascomycota</taxon>
        <taxon>Saccharomycotina</taxon>
        <taxon>Dipodascomycetes</taxon>
        <taxon>Dipodascales</taxon>
        <taxon>Dipodascales incertae sedis</taxon>
        <taxon>Yarrowia</taxon>
    </lineage>
</organism>
<protein>
    <recommendedName>
        <fullName>1-(5-phosphoribosyl)-5-[(5-phosphoribosylamino)methylideneamino] imidazole-4-carboxamide isomerase</fullName>
        <ecNumber>5.3.1.16</ecNumber>
    </recommendedName>
    <alternativeName>
        <fullName>5-proFAR isomerase</fullName>
    </alternativeName>
    <alternativeName>
        <fullName>Phosphoribosylformimino-5-aminoimidazole carboxamide ribotide isomerase</fullName>
    </alternativeName>
</protein>
<feature type="chain" id="PRO_0000141962" description="1-(5-phosphoribosyl)-5-[(5-phosphoribosylamino)methylideneamino] imidazole-4-carboxamide isomerase">
    <location>
        <begin position="1"/>
        <end position="264"/>
    </location>
</feature>
<sequence>MTKFRGCIDIHSGQVKQIVGGTLTDSDADLKTNFVATQPPGYFAQLYKDNNVVGTHVIKLGPGCDEAAEEALAGWPDHLQIGGGINHDNAEKWIKLGASHVIVTSFLFPDAKLDMKRLTDLEAILEPYGGKKRIVVDLSCRRKDGKWVVAMNRWQTLTDTEVNKETLEQLAKHCDEFLIHAADVEGLCNGIDEELVTKLGEWLEEGHLPPVTYAGGAKNIDDLALVQKLSHGKVDLTYGSALDVFGGDKVKFSDCVEWNEKMHK</sequence>
<name>HIS4_YARLI</name>
<evidence type="ECO:0000250" key="1"/>
<evidence type="ECO:0000305" key="2"/>
<proteinExistence type="inferred from homology"/>
<gene>
    <name type="primary">HIS6</name>
    <name type="ordered locus">YALI0F05192g</name>
</gene>
<dbReference type="EC" id="5.3.1.16"/>
<dbReference type="EMBL" id="CR382132">
    <property type="protein sequence ID" value="CAG77829.1"/>
    <property type="molecule type" value="Genomic_DNA"/>
</dbReference>
<dbReference type="RefSeq" id="XP_505022.1">
    <property type="nucleotide sequence ID" value="XM_505022.1"/>
</dbReference>
<dbReference type="SMR" id="Q6C2U0"/>
<dbReference type="FunCoup" id="Q6C2U0">
    <property type="interactions" value="230"/>
</dbReference>
<dbReference type="STRING" id="284591.Q6C2U0"/>
<dbReference type="EnsemblFungi" id="CAG77829">
    <property type="protein sequence ID" value="CAG77829"/>
    <property type="gene ID" value="YALI0_F05192g"/>
</dbReference>
<dbReference type="KEGG" id="yli:2908162"/>
<dbReference type="VEuPathDB" id="FungiDB:YALI0_F05192g"/>
<dbReference type="HOGENOM" id="CLU_065050_0_0_1"/>
<dbReference type="InParanoid" id="Q6C2U0"/>
<dbReference type="OMA" id="IEWNKTH"/>
<dbReference type="OrthoDB" id="629at4891"/>
<dbReference type="UniPathway" id="UPA00031">
    <property type="reaction ID" value="UER00009"/>
</dbReference>
<dbReference type="Proteomes" id="UP000001300">
    <property type="component" value="Chromosome F"/>
</dbReference>
<dbReference type="GO" id="GO:0005737">
    <property type="term" value="C:cytoplasm"/>
    <property type="evidence" value="ECO:0000318"/>
    <property type="project" value="GO_Central"/>
</dbReference>
<dbReference type="GO" id="GO:0003949">
    <property type="term" value="F:1-(5-phosphoribosyl)-5-[(5-phosphoribosylamino)methylideneamino]imidazole-4-carboxamide isomerase activity"/>
    <property type="evidence" value="ECO:0000318"/>
    <property type="project" value="GO_Central"/>
</dbReference>
<dbReference type="GO" id="GO:0000105">
    <property type="term" value="P:L-histidine biosynthetic process"/>
    <property type="evidence" value="ECO:0000318"/>
    <property type="project" value="GO_Central"/>
</dbReference>
<dbReference type="CDD" id="cd04723">
    <property type="entry name" value="HisA_HisF"/>
    <property type="match status" value="1"/>
</dbReference>
<dbReference type="FunFam" id="3.20.20.70:FF:000110">
    <property type="entry name" value="1-(5-phosphoribosyl)-5-[(5-phosphoribosylamino)methylideneamino] imidazole-4-carboxamide isomerase, chloroplastic"/>
    <property type="match status" value="1"/>
</dbReference>
<dbReference type="Gene3D" id="3.20.20.70">
    <property type="entry name" value="Aldolase class I"/>
    <property type="match status" value="1"/>
</dbReference>
<dbReference type="InterPro" id="IPR013785">
    <property type="entry name" value="Aldolase_TIM"/>
</dbReference>
<dbReference type="InterPro" id="IPR011858">
    <property type="entry name" value="His6-like_euk"/>
</dbReference>
<dbReference type="InterPro" id="IPR006062">
    <property type="entry name" value="His_biosynth"/>
</dbReference>
<dbReference type="InterPro" id="IPR044524">
    <property type="entry name" value="Isoase_HisA-like"/>
</dbReference>
<dbReference type="InterPro" id="IPR011060">
    <property type="entry name" value="RibuloseP-bd_barrel"/>
</dbReference>
<dbReference type="NCBIfam" id="TIGR02129">
    <property type="entry name" value="hisA_euk"/>
    <property type="match status" value="1"/>
</dbReference>
<dbReference type="PANTHER" id="PTHR43090">
    <property type="entry name" value="1-(5-PHOSPHORIBOSYL)-5-[(5-PHOSPHORIBOSYLAMINO)METHYLIDENEAMINO] IMIDAZOLE-4-CARBOXAMIDE ISOMERASE"/>
    <property type="match status" value="1"/>
</dbReference>
<dbReference type="PANTHER" id="PTHR43090:SF2">
    <property type="entry name" value="1-(5-PHOSPHORIBOSYL)-5-[(5-PHOSPHORIBOSYLAMINO)METHYLIDENEAMINO] IMIDAZOLE-4-CARBOXAMIDE ISOMERASE"/>
    <property type="match status" value="1"/>
</dbReference>
<dbReference type="Pfam" id="PF00977">
    <property type="entry name" value="His_biosynth"/>
    <property type="match status" value="1"/>
</dbReference>
<dbReference type="SUPFAM" id="SSF51366">
    <property type="entry name" value="Ribulose-phoshate binding barrel"/>
    <property type="match status" value="1"/>
</dbReference>
<keyword id="KW-0028">Amino-acid biosynthesis</keyword>
<keyword id="KW-0963">Cytoplasm</keyword>
<keyword id="KW-0368">Histidine biosynthesis</keyword>
<keyword id="KW-0413">Isomerase</keyword>
<keyword id="KW-1185">Reference proteome</keyword>
<accession>Q6C2U0</accession>
<reference key="1">
    <citation type="journal article" date="2004" name="Nature">
        <title>Genome evolution in yeasts.</title>
        <authorList>
            <person name="Dujon B."/>
            <person name="Sherman D."/>
            <person name="Fischer G."/>
            <person name="Durrens P."/>
            <person name="Casaregola S."/>
            <person name="Lafontaine I."/>
            <person name="de Montigny J."/>
            <person name="Marck C."/>
            <person name="Neuveglise C."/>
            <person name="Talla E."/>
            <person name="Goffard N."/>
            <person name="Frangeul L."/>
            <person name="Aigle M."/>
            <person name="Anthouard V."/>
            <person name="Babour A."/>
            <person name="Barbe V."/>
            <person name="Barnay S."/>
            <person name="Blanchin S."/>
            <person name="Beckerich J.-M."/>
            <person name="Beyne E."/>
            <person name="Bleykasten C."/>
            <person name="Boisrame A."/>
            <person name="Boyer J."/>
            <person name="Cattolico L."/>
            <person name="Confanioleri F."/>
            <person name="de Daruvar A."/>
            <person name="Despons L."/>
            <person name="Fabre E."/>
            <person name="Fairhead C."/>
            <person name="Ferry-Dumazet H."/>
            <person name="Groppi A."/>
            <person name="Hantraye F."/>
            <person name="Hennequin C."/>
            <person name="Jauniaux N."/>
            <person name="Joyet P."/>
            <person name="Kachouri R."/>
            <person name="Kerrest A."/>
            <person name="Koszul R."/>
            <person name="Lemaire M."/>
            <person name="Lesur I."/>
            <person name="Ma L."/>
            <person name="Muller H."/>
            <person name="Nicaud J.-M."/>
            <person name="Nikolski M."/>
            <person name="Oztas S."/>
            <person name="Ozier-Kalogeropoulos O."/>
            <person name="Pellenz S."/>
            <person name="Potier S."/>
            <person name="Richard G.-F."/>
            <person name="Straub M.-L."/>
            <person name="Suleau A."/>
            <person name="Swennen D."/>
            <person name="Tekaia F."/>
            <person name="Wesolowski-Louvel M."/>
            <person name="Westhof E."/>
            <person name="Wirth B."/>
            <person name="Zeniou-Meyer M."/>
            <person name="Zivanovic Y."/>
            <person name="Bolotin-Fukuhara M."/>
            <person name="Thierry A."/>
            <person name="Bouchier C."/>
            <person name="Caudron B."/>
            <person name="Scarpelli C."/>
            <person name="Gaillardin C."/>
            <person name="Weissenbach J."/>
            <person name="Wincker P."/>
            <person name="Souciet J.-L."/>
        </authorList>
    </citation>
    <scope>NUCLEOTIDE SEQUENCE [LARGE SCALE GENOMIC DNA]</scope>
    <source>
        <strain>CLIB 122 / E 150</strain>
    </source>
</reference>
<comment type="catalytic activity">
    <reaction>
        <text>1-(5-phospho-beta-D-ribosyl)-5-[(5-phospho-beta-D-ribosylamino)methylideneamino]imidazole-4-carboxamide = 5-[(5-phospho-1-deoxy-D-ribulos-1-ylimino)methylamino]-1-(5-phospho-beta-D-ribosyl)imidazole-4-carboxamide</text>
        <dbReference type="Rhea" id="RHEA:15469"/>
        <dbReference type="ChEBI" id="CHEBI:58435"/>
        <dbReference type="ChEBI" id="CHEBI:58525"/>
        <dbReference type="EC" id="5.3.1.16"/>
    </reaction>
</comment>
<comment type="pathway">
    <text>Amino-acid biosynthesis; L-histidine biosynthesis; L-histidine from 5-phospho-alpha-D-ribose 1-diphosphate: step 4/9.</text>
</comment>
<comment type="subcellular location">
    <subcellularLocation>
        <location evidence="1">Cytoplasm</location>
    </subcellularLocation>
</comment>
<comment type="similarity">
    <text evidence="2">Belongs to the HisA/HisF family.</text>
</comment>